<organism>
    <name type="scientific">Salmonella typhi</name>
    <dbReference type="NCBI Taxonomy" id="90370"/>
    <lineage>
        <taxon>Bacteria</taxon>
        <taxon>Pseudomonadati</taxon>
        <taxon>Pseudomonadota</taxon>
        <taxon>Gammaproteobacteria</taxon>
        <taxon>Enterobacterales</taxon>
        <taxon>Enterobacteriaceae</taxon>
        <taxon>Salmonella</taxon>
    </lineage>
</organism>
<name>PSIE_SALTI</name>
<sequence length="136" mass="15604">MMPLSRSRLEFIATILQNVLNLGLLTLGLILVVFLGKETVHLADALFAPEQASKYELVEGLVIYFLYFEFIALIVKYFKSGLHFPLRYFVYIGITAIVRLIIVDHKTPMDVLLYSAAILLLVITLWLCNSNRLRRE</sequence>
<comment type="subcellular location">
    <subcellularLocation>
        <location evidence="1">Cell inner membrane</location>
        <topology evidence="1">Multi-pass membrane protein</topology>
    </subcellularLocation>
</comment>
<comment type="similarity">
    <text evidence="3">Belongs to the PsiE family.</text>
</comment>
<reference key="1">
    <citation type="journal article" date="2001" name="Nature">
        <title>Complete genome sequence of a multiple drug resistant Salmonella enterica serovar Typhi CT18.</title>
        <authorList>
            <person name="Parkhill J."/>
            <person name="Dougan G."/>
            <person name="James K.D."/>
            <person name="Thomson N.R."/>
            <person name="Pickard D."/>
            <person name="Wain J."/>
            <person name="Churcher C.M."/>
            <person name="Mungall K.L."/>
            <person name="Bentley S.D."/>
            <person name="Holden M.T.G."/>
            <person name="Sebaihia M."/>
            <person name="Baker S."/>
            <person name="Basham D."/>
            <person name="Brooks K."/>
            <person name="Chillingworth T."/>
            <person name="Connerton P."/>
            <person name="Cronin A."/>
            <person name="Davis P."/>
            <person name="Davies R.M."/>
            <person name="Dowd L."/>
            <person name="White N."/>
            <person name="Farrar J."/>
            <person name="Feltwell T."/>
            <person name="Hamlin N."/>
            <person name="Haque A."/>
            <person name="Hien T.T."/>
            <person name="Holroyd S."/>
            <person name="Jagels K."/>
            <person name="Krogh A."/>
            <person name="Larsen T.S."/>
            <person name="Leather S."/>
            <person name="Moule S."/>
            <person name="O'Gaora P."/>
            <person name="Parry C."/>
            <person name="Quail M.A."/>
            <person name="Rutherford K.M."/>
            <person name="Simmonds M."/>
            <person name="Skelton J."/>
            <person name="Stevens K."/>
            <person name="Whitehead S."/>
            <person name="Barrell B.G."/>
        </authorList>
    </citation>
    <scope>NUCLEOTIDE SEQUENCE [LARGE SCALE GENOMIC DNA]</scope>
    <source>
        <strain>CT18</strain>
    </source>
</reference>
<reference key="2">
    <citation type="journal article" date="2003" name="J. Bacteriol.">
        <title>Comparative genomics of Salmonella enterica serovar Typhi strains Ty2 and CT18.</title>
        <authorList>
            <person name="Deng W."/>
            <person name="Liou S.-R."/>
            <person name="Plunkett G. III"/>
            <person name="Mayhew G.F."/>
            <person name="Rose D.J."/>
            <person name="Burland V."/>
            <person name="Kodoyianni V."/>
            <person name="Schwartz D.C."/>
            <person name="Blattner F.R."/>
        </authorList>
    </citation>
    <scope>NUCLEOTIDE SEQUENCE [LARGE SCALE GENOMIC DNA]</scope>
    <source>
        <strain>ATCC 700931 / Ty2</strain>
    </source>
</reference>
<proteinExistence type="inferred from homology"/>
<dbReference type="EMBL" id="AL513382">
    <property type="protein sequence ID" value="CAD09210.1"/>
    <property type="molecule type" value="Genomic_DNA"/>
</dbReference>
<dbReference type="EMBL" id="AE014613">
    <property type="protein sequence ID" value="AAO71596.1"/>
    <property type="molecule type" value="Genomic_DNA"/>
</dbReference>
<dbReference type="RefSeq" id="NP_458524.1">
    <property type="nucleotide sequence ID" value="NC_003198.1"/>
</dbReference>
<dbReference type="RefSeq" id="WP_000982749.1">
    <property type="nucleotide sequence ID" value="NZ_WSUR01000027.1"/>
</dbReference>
<dbReference type="SMR" id="P0A280"/>
<dbReference type="STRING" id="220341.gene:17588254"/>
<dbReference type="KEGG" id="stt:t4132"/>
<dbReference type="KEGG" id="sty:STY4422"/>
<dbReference type="PATRIC" id="fig|220341.7.peg.4522"/>
<dbReference type="eggNOG" id="COG3223">
    <property type="taxonomic scope" value="Bacteria"/>
</dbReference>
<dbReference type="HOGENOM" id="CLU_127561_0_1_6"/>
<dbReference type="OMA" id="HEWHQKV"/>
<dbReference type="OrthoDB" id="9792470at2"/>
<dbReference type="Proteomes" id="UP000000541">
    <property type="component" value="Chromosome"/>
</dbReference>
<dbReference type="Proteomes" id="UP000002670">
    <property type="component" value="Chromosome"/>
</dbReference>
<dbReference type="GO" id="GO:0005886">
    <property type="term" value="C:plasma membrane"/>
    <property type="evidence" value="ECO:0007669"/>
    <property type="project" value="UniProtKB-SubCell"/>
</dbReference>
<dbReference type="GO" id="GO:0016036">
    <property type="term" value="P:cellular response to phosphate starvation"/>
    <property type="evidence" value="ECO:0007669"/>
    <property type="project" value="InterPro"/>
</dbReference>
<dbReference type="HAMAP" id="MF_01048">
    <property type="entry name" value="PsiE"/>
    <property type="match status" value="1"/>
</dbReference>
<dbReference type="InterPro" id="IPR009315">
    <property type="entry name" value="P_starv_induced_PsiE"/>
</dbReference>
<dbReference type="InterPro" id="IPR020948">
    <property type="entry name" value="P_starv_induced_PsiE-like"/>
</dbReference>
<dbReference type="NCBIfam" id="NF002764">
    <property type="entry name" value="PRK02833.1-2"/>
    <property type="match status" value="1"/>
</dbReference>
<dbReference type="NCBIfam" id="NF002765">
    <property type="entry name" value="PRK02833.1-3"/>
    <property type="match status" value="1"/>
</dbReference>
<dbReference type="NCBIfam" id="NF002767">
    <property type="entry name" value="PRK02833.1-5"/>
    <property type="match status" value="1"/>
</dbReference>
<dbReference type="PANTHER" id="PTHR37819">
    <property type="entry name" value="PROTEIN PSIE"/>
    <property type="match status" value="1"/>
</dbReference>
<dbReference type="PANTHER" id="PTHR37819:SF1">
    <property type="entry name" value="PROTEIN PSIE"/>
    <property type="match status" value="1"/>
</dbReference>
<dbReference type="Pfam" id="PF06146">
    <property type="entry name" value="PsiE"/>
    <property type="match status" value="1"/>
</dbReference>
<dbReference type="PIRSF" id="PIRSF029598">
    <property type="entry name" value="PsiE"/>
    <property type="match status" value="1"/>
</dbReference>
<keyword id="KW-0997">Cell inner membrane</keyword>
<keyword id="KW-1003">Cell membrane</keyword>
<keyword id="KW-0472">Membrane</keyword>
<keyword id="KW-0812">Transmembrane</keyword>
<keyword id="KW-1133">Transmembrane helix</keyword>
<protein>
    <recommendedName>
        <fullName>Protein PsiE</fullName>
    </recommendedName>
</protein>
<feature type="chain" id="PRO_0000160293" description="Protein PsiE">
    <location>
        <begin position="1"/>
        <end position="136"/>
    </location>
</feature>
<feature type="topological domain" description="Cytoplasmic" evidence="2">
    <location>
        <begin position="1"/>
        <end position="14"/>
    </location>
</feature>
<feature type="transmembrane region" description="Helical" evidence="2">
    <location>
        <begin position="15"/>
        <end position="35"/>
    </location>
</feature>
<feature type="topological domain" description="Periplasmic" evidence="2">
    <location>
        <begin position="36"/>
        <end position="54"/>
    </location>
</feature>
<feature type="transmembrane region" description="Helical" evidence="2">
    <location>
        <begin position="55"/>
        <end position="75"/>
    </location>
</feature>
<feature type="topological domain" description="Cytoplasmic" evidence="2">
    <location>
        <begin position="76"/>
        <end position="82"/>
    </location>
</feature>
<feature type="transmembrane region" description="Helical" evidence="2">
    <location>
        <begin position="83"/>
        <end position="103"/>
    </location>
</feature>
<feature type="topological domain" description="Periplasmic" evidence="2">
    <location>
        <begin position="104"/>
        <end position="107"/>
    </location>
</feature>
<feature type="transmembrane region" description="Helical" evidence="2">
    <location>
        <begin position="108"/>
        <end position="128"/>
    </location>
</feature>
<feature type="topological domain" description="Cytoplasmic" evidence="2">
    <location>
        <begin position="129"/>
        <end position="136"/>
    </location>
</feature>
<evidence type="ECO:0000250" key="1"/>
<evidence type="ECO:0000255" key="2"/>
<evidence type="ECO:0000305" key="3"/>
<gene>
    <name type="primary">psiE</name>
    <name type="ordered locus">STY4422</name>
    <name type="ordered locus">t4132</name>
</gene>
<accession>P0A280</accession>
<accession>O30901</accession>